<accession>C3VMW3</accession>
<reference key="1">
    <citation type="submission" date="2009-03" db="EMBL/GenBank/DDBJ databases">
        <authorList>
            <person name="Xie J.-X."/>
            <person name="Wang Y.-L."/>
            <person name="Yang G.-Y."/>
            <person name="Wang W.-J."/>
            <person name="Zhang Z.-Q."/>
            <person name="Chen F.-W."/>
            <person name="Li W.-L."/>
            <person name="Chang L."/>
            <person name="Yan W."/>
            <person name="Sun Y.-L."/>
            <person name="Gao J.-W."/>
            <person name="Niu H."/>
            <person name="Wu Y.-X."/>
            <person name="Wang J."/>
            <person name="Zang M."/>
        </authorList>
    </citation>
    <scope>NUCLEOTIDE SEQUENCE [MRNA]</scope>
</reference>
<reference key="2">
    <citation type="submission" date="2009-11" db="EMBL/GenBank/DDBJ databases">
        <authorList>
            <consortium name="Porcine genome sequencing project"/>
        </authorList>
    </citation>
    <scope>NUCLEOTIDE SEQUENCE [LARGE SCALE GENOMIC DNA]</scope>
    <source>
        <strain>Duroc</strain>
    </source>
</reference>
<comment type="function">
    <text evidence="1">Channel-forming tight junction protein with selectivity for anions, including chloride and hydrogencarbonate, and for solutes smaller than 9 Angstrom in diameter. In the kidney proximal tubule, may be involved in quantitative reabsorption of filtered anions. Does not affect water permeability.</text>
</comment>
<comment type="catalytic activity">
    <reaction evidence="1">
        <text>chloride(in) = chloride(out)</text>
        <dbReference type="Rhea" id="RHEA:29823"/>
        <dbReference type="ChEBI" id="CHEBI:17996"/>
    </reaction>
</comment>
<comment type="catalytic activity">
    <reaction evidence="1">
        <text>hydrogencarbonate(in) = hydrogencarbonate(out)</text>
        <dbReference type="Rhea" id="RHEA:28695"/>
        <dbReference type="ChEBI" id="CHEBI:17544"/>
    </reaction>
</comment>
<comment type="catalytic activity">
    <reaction evidence="1">
        <text>bromide(in) = bromide(out)</text>
        <dbReference type="Rhea" id="RHEA:75383"/>
        <dbReference type="ChEBI" id="CHEBI:15858"/>
    </reaction>
</comment>
<comment type="catalytic activity">
    <reaction evidence="1">
        <text>iodide(out) = iodide(in)</text>
        <dbReference type="Rhea" id="RHEA:66324"/>
        <dbReference type="ChEBI" id="CHEBI:16382"/>
    </reaction>
</comment>
<comment type="catalytic activity">
    <reaction evidence="1">
        <text>fluoride(in) = fluoride(out)</text>
        <dbReference type="Rhea" id="RHEA:76159"/>
        <dbReference type="ChEBI" id="CHEBI:17051"/>
    </reaction>
</comment>
<comment type="catalytic activity">
    <reaction evidence="1">
        <text>nitrate(in) = nitrate(out)</text>
        <dbReference type="Rhea" id="RHEA:34923"/>
        <dbReference type="ChEBI" id="CHEBI:17632"/>
    </reaction>
</comment>
<comment type="catalytic activity">
    <reaction evidence="1">
        <text>thiocyanate(in) = thiocyanate(out)</text>
        <dbReference type="Rhea" id="RHEA:75347"/>
        <dbReference type="ChEBI" id="CHEBI:18022"/>
    </reaction>
</comment>
<comment type="subunit">
    <text evidence="1">Does not form homotypic polymeric strands and it is not sufficient to form tight junctions by its own. Interacts with OCLN.</text>
</comment>
<comment type="subcellular location">
    <subcellularLocation>
        <location evidence="1">Cell junction</location>
        <location evidence="1">Tight junction</location>
    </subcellularLocation>
    <subcellularLocation>
        <location evidence="1">Cell membrane</location>
        <topology evidence="1">Multi-pass membrane protein</topology>
    </subcellularLocation>
</comment>
<comment type="similarity">
    <text evidence="4">Belongs to the claudin family.</text>
</comment>
<organism>
    <name type="scientific">Sus scrofa</name>
    <name type="common">Pig</name>
    <dbReference type="NCBI Taxonomy" id="9823"/>
    <lineage>
        <taxon>Eukaryota</taxon>
        <taxon>Metazoa</taxon>
        <taxon>Chordata</taxon>
        <taxon>Craniata</taxon>
        <taxon>Vertebrata</taxon>
        <taxon>Euteleostomi</taxon>
        <taxon>Mammalia</taxon>
        <taxon>Eutheria</taxon>
        <taxon>Laurasiatheria</taxon>
        <taxon>Artiodactyla</taxon>
        <taxon>Suina</taxon>
        <taxon>Suidae</taxon>
        <taxon>Sus</taxon>
    </lineage>
</organism>
<sequence>MAFYPLQIAGLVLGFLGMVGTLATTLLPQWRVSAFIGSNIIVFERIWEGLWMNCVRQAKARLQCKFYSSMLALSPALEAARALMCVAVALSLIALIIGICGMKKIQCTGSNERAKAYLLGTSGVLFILTGIFVLIPVCWTANIIIRDFYNPAVHVGQKRELGAALFLGWASVAVLFIAGGLLCGFCCCNRKKQRDGYPAPRPSMPRTDERRRNMTRQSETPTSYV</sequence>
<feature type="chain" id="PRO_0000437543" description="Claudin-17">
    <location>
        <begin position="1"/>
        <end position="225"/>
    </location>
</feature>
<feature type="topological domain" description="Cytoplasmic" evidence="4">
    <location>
        <begin position="1"/>
        <end position="7"/>
    </location>
</feature>
<feature type="transmembrane region" description="Helical" evidence="2">
    <location>
        <begin position="8"/>
        <end position="28"/>
    </location>
</feature>
<feature type="topological domain" description="Extracellular" evidence="4">
    <location>
        <begin position="29"/>
        <end position="81"/>
    </location>
</feature>
<feature type="transmembrane region" description="Helical" evidence="2">
    <location>
        <begin position="82"/>
        <end position="102"/>
    </location>
</feature>
<feature type="topological domain" description="Cytoplasmic" evidence="4">
    <location>
        <begin position="103"/>
        <end position="124"/>
    </location>
</feature>
<feature type="transmembrane region" description="Helical" evidence="2">
    <location>
        <begin position="125"/>
        <end position="145"/>
    </location>
</feature>
<feature type="topological domain" description="Extracellular" evidence="4">
    <location>
        <begin position="146"/>
        <end position="164"/>
    </location>
</feature>
<feature type="transmembrane region" description="Helical" evidence="2">
    <location>
        <begin position="165"/>
        <end position="185"/>
    </location>
</feature>
<feature type="topological domain" description="Cytoplasmic" evidence="4">
    <location>
        <begin position="186"/>
        <end position="225"/>
    </location>
</feature>
<feature type="region of interest" description="Disordered" evidence="3">
    <location>
        <begin position="194"/>
        <end position="225"/>
    </location>
</feature>
<feature type="compositionally biased region" description="Polar residues" evidence="3">
    <location>
        <begin position="215"/>
        <end position="225"/>
    </location>
</feature>
<proteinExistence type="evidence at transcript level"/>
<keyword id="KW-0965">Cell junction</keyword>
<keyword id="KW-1003">Cell membrane</keyword>
<keyword id="KW-0868">Chloride</keyword>
<keyword id="KW-0869">Chloride channel</keyword>
<keyword id="KW-0407">Ion channel</keyword>
<keyword id="KW-0406">Ion transport</keyword>
<keyword id="KW-0472">Membrane</keyword>
<keyword id="KW-1185">Reference proteome</keyword>
<keyword id="KW-0796">Tight junction</keyword>
<keyword id="KW-0812">Transmembrane</keyword>
<keyword id="KW-1133">Transmembrane helix</keyword>
<keyword id="KW-0813">Transport</keyword>
<gene>
    <name type="primary">CLDN17</name>
</gene>
<dbReference type="EMBL" id="FJ875102">
    <property type="protein sequence ID" value="ACP19320.1"/>
    <property type="molecule type" value="mRNA"/>
</dbReference>
<dbReference type="EMBL" id="CU855716">
    <property type="status" value="NOT_ANNOTATED_CDS"/>
    <property type="molecule type" value="Genomic_DNA"/>
</dbReference>
<dbReference type="RefSeq" id="NP_001153555.1">
    <property type="nucleotide sequence ID" value="NM_001160083.1"/>
</dbReference>
<dbReference type="SMR" id="C3VMW3"/>
<dbReference type="FunCoup" id="C3VMW3">
    <property type="interactions" value="94"/>
</dbReference>
<dbReference type="STRING" id="9823.ENSSSCP00000012813"/>
<dbReference type="PaxDb" id="9823-ENSSSCP00000012813"/>
<dbReference type="Ensembl" id="ENSSSCT00000013163.4">
    <property type="protein sequence ID" value="ENSSSCP00000012813.1"/>
    <property type="gene ID" value="ENSSSCG00000012031.4"/>
</dbReference>
<dbReference type="Ensembl" id="ENSSSCT00035105358.1">
    <property type="protein sequence ID" value="ENSSSCP00035045236.1"/>
    <property type="gene ID" value="ENSSSCG00035077377.1"/>
</dbReference>
<dbReference type="Ensembl" id="ENSSSCT00045003004.1">
    <property type="protein sequence ID" value="ENSSSCP00045001895.1"/>
    <property type="gene ID" value="ENSSSCG00045001927.1"/>
</dbReference>
<dbReference type="Ensembl" id="ENSSSCT00055031144.1">
    <property type="protein sequence ID" value="ENSSSCP00055024800.1"/>
    <property type="gene ID" value="ENSSSCG00055015813.1"/>
</dbReference>
<dbReference type="Ensembl" id="ENSSSCT00065067091.1">
    <property type="protein sequence ID" value="ENSSSCP00065029147.1"/>
    <property type="gene ID" value="ENSSSCG00065049022.1"/>
</dbReference>
<dbReference type="Ensembl" id="ENSSSCT00090054365">
    <property type="protein sequence ID" value="ENSSSCP00090033819"/>
    <property type="gene ID" value="ENSSSCG00090030720"/>
</dbReference>
<dbReference type="Ensembl" id="ENSSSCT00105000653">
    <property type="protein sequence ID" value="ENSSSCP00105000456"/>
    <property type="gene ID" value="ENSSSCG00105000371"/>
</dbReference>
<dbReference type="Ensembl" id="ENSSSCT00115005593">
    <property type="protein sequence ID" value="ENSSSCP00115005191"/>
    <property type="gene ID" value="ENSSSCG00115003333"/>
</dbReference>
<dbReference type="Ensembl" id="ENSSSCT00130067245">
    <property type="protein sequence ID" value="ENSSSCP00130048254"/>
    <property type="gene ID" value="ENSSSCG00130034419"/>
</dbReference>
<dbReference type="GeneID" id="100294681"/>
<dbReference type="KEGG" id="ssc:100294681"/>
<dbReference type="CTD" id="26285"/>
<dbReference type="VGNC" id="VGNC:86734">
    <property type="gene designation" value="CLDN17"/>
</dbReference>
<dbReference type="eggNOG" id="ENOG502RTNJ">
    <property type="taxonomic scope" value="Eukaryota"/>
</dbReference>
<dbReference type="GeneTree" id="ENSGT00940000162550"/>
<dbReference type="HOGENOM" id="CLU_076370_1_2_1"/>
<dbReference type="InParanoid" id="C3VMW3"/>
<dbReference type="OMA" id="VCWTANI"/>
<dbReference type="OrthoDB" id="8819159at2759"/>
<dbReference type="TreeFam" id="TF331936"/>
<dbReference type="Proteomes" id="UP000008227">
    <property type="component" value="Chromosome 13"/>
</dbReference>
<dbReference type="Proteomes" id="UP000314985">
    <property type="component" value="Unplaced"/>
</dbReference>
<dbReference type="Proteomes" id="UP000694570">
    <property type="component" value="Unplaced"/>
</dbReference>
<dbReference type="Proteomes" id="UP000694571">
    <property type="component" value="Unplaced"/>
</dbReference>
<dbReference type="Proteomes" id="UP000694720">
    <property type="component" value="Unplaced"/>
</dbReference>
<dbReference type="Proteomes" id="UP000694722">
    <property type="component" value="Unplaced"/>
</dbReference>
<dbReference type="Proteomes" id="UP000694723">
    <property type="component" value="Unplaced"/>
</dbReference>
<dbReference type="Proteomes" id="UP000694724">
    <property type="component" value="Unplaced"/>
</dbReference>
<dbReference type="Proteomes" id="UP000694725">
    <property type="component" value="Unplaced"/>
</dbReference>
<dbReference type="Proteomes" id="UP000694726">
    <property type="component" value="Unplaced"/>
</dbReference>
<dbReference type="Proteomes" id="UP000694727">
    <property type="component" value="Unplaced"/>
</dbReference>
<dbReference type="Proteomes" id="UP000694728">
    <property type="component" value="Unplaced"/>
</dbReference>
<dbReference type="Bgee" id="ENSSSCG00000012031">
    <property type="expression patterns" value="Expressed in tonsil and 1 other cell type or tissue"/>
</dbReference>
<dbReference type="GO" id="GO:0005923">
    <property type="term" value="C:bicellular tight junction"/>
    <property type="evidence" value="ECO:0000318"/>
    <property type="project" value="GO_Central"/>
</dbReference>
<dbReference type="GO" id="GO:0034707">
    <property type="term" value="C:chloride channel complex"/>
    <property type="evidence" value="ECO:0007669"/>
    <property type="project" value="UniProtKB-KW"/>
</dbReference>
<dbReference type="GO" id="GO:0005886">
    <property type="term" value="C:plasma membrane"/>
    <property type="evidence" value="ECO:0000318"/>
    <property type="project" value="GO_Central"/>
</dbReference>
<dbReference type="GO" id="GO:0070160">
    <property type="term" value="C:tight junction"/>
    <property type="evidence" value="ECO:0000250"/>
    <property type="project" value="UniProtKB"/>
</dbReference>
<dbReference type="GO" id="GO:0005254">
    <property type="term" value="F:chloride channel activity"/>
    <property type="evidence" value="ECO:0007669"/>
    <property type="project" value="UniProtKB-KW"/>
</dbReference>
<dbReference type="GO" id="GO:0160187">
    <property type="term" value="F:paracellular tight junction channel activity"/>
    <property type="evidence" value="ECO:0000250"/>
    <property type="project" value="UniProtKB"/>
</dbReference>
<dbReference type="GO" id="GO:0005198">
    <property type="term" value="F:structural molecule activity"/>
    <property type="evidence" value="ECO:0007669"/>
    <property type="project" value="InterPro"/>
</dbReference>
<dbReference type="GO" id="GO:0070830">
    <property type="term" value="P:bicellular tight junction assembly"/>
    <property type="evidence" value="ECO:0000318"/>
    <property type="project" value="GO_Central"/>
</dbReference>
<dbReference type="GO" id="GO:0007155">
    <property type="term" value="P:cell adhesion"/>
    <property type="evidence" value="ECO:0000318"/>
    <property type="project" value="GO_Central"/>
</dbReference>
<dbReference type="GO" id="GO:0160184">
    <property type="term" value="P:paracellular transport"/>
    <property type="evidence" value="ECO:0000250"/>
    <property type="project" value="UniProtKB"/>
</dbReference>
<dbReference type="FunFam" id="1.20.140.150:FF:000001">
    <property type="entry name" value="Claudin"/>
    <property type="match status" value="1"/>
</dbReference>
<dbReference type="Gene3D" id="1.20.140.150">
    <property type="match status" value="1"/>
</dbReference>
<dbReference type="InterPro" id="IPR006187">
    <property type="entry name" value="Claudin"/>
</dbReference>
<dbReference type="InterPro" id="IPR017974">
    <property type="entry name" value="Claudin_CS"/>
</dbReference>
<dbReference type="InterPro" id="IPR004031">
    <property type="entry name" value="PMP22/EMP/MP20/Claudin"/>
</dbReference>
<dbReference type="PANTHER" id="PTHR12002">
    <property type="entry name" value="CLAUDIN"/>
    <property type="match status" value="1"/>
</dbReference>
<dbReference type="Pfam" id="PF00822">
    <property type="entry name" value="PMP22_Claudin"/>
    <property type="match status" value="1"/>
</dbReference>
<dbReference type="PRINTS" id="PR01077">
    <property type="entry name" value="CLAUDIN"/>
</dbReference>
<dbReference type="PRINTS" id="PR01385">
    <property type="entry name" value="CLAUDIN14"/>
</dbReference>
<dbReference type="PROSITE" id="PS01346">
    <property type="entry name" value="CLAUDIN"/>
    <property type="match status" value="1"/>
</dbReference>
<name>CLD17_PIG</name>
<protein>
    <recommendedName>
        <fullName>Claudin-17</fullName>
    </recommendedName>
</protein>
<evidence type="ECO:0000250" key="1">
    <source>
        <dbReference type="UniProtKB" id="P56750"/>
    </source>
</evidence>
<evidence type="ECO:0000255" key="2"/>
<evidence type="ECO:0000256" key="3">
    <source>
        <dbReference type="SAM" id="MobiDB-lite"/>
    </source>
</evidence>
<evidence type="ECO:0000305" key="4"/>